<dbReference type="EC" id="3.4.21.88" evidence="1"/>
<dbReference type="EMBL" id="CP000090">
    <property type="protein sequence ID" value="AAZ61372.1"/>
    <property type="molecule type" value="Genomic_DNA"/>
</dbReference>
<dbReference type="SMR" id="Q46ZR1"/>
<dbReference type="STRING" id="264198.Reut_A2008"/>
<dbReference type="MEROPS" id="S24.001"/>
<dbReference type="KEGG" id="reu:Reut_A2008"/>
<dbReference type="eggNOG" id="COG1974">
    <property type="taxonomic scope" value="Bacteria"/>
</dbReference>
<dbReference type="HOGENOM" id="CLU_066192_45_3_4"/>
<dbReference type="OrthoDB" id="9802364at2"/>
<dbReference type="GO" id="GO:0003677">
    <property type="term" value="F:DNA binding"/>
    <property type="evidence" value="ECO:0007669"/>
    <property type="project" value="UniProtKB-UniRule"/>
</dbReference>
<dbReference type="GO" id="GO:0004252">
    <property type="term" value="F:serine-type endopeptidase activity"/>
    <property type="evidence" value="ECO:0007669"/>
    <property type="project" value="UniProtKB-UniRule"/>
</dbReference>
<dbReference type="GO" id="GO:0006281">
    <property type="term" value="P:DNA repair"/>
    <property type="evidence" value="ECO:0007669"/>
    <property type="project" value="UniProtKB-UniRule"/>
</dbReference>
<dbReference type="GO" id="GO:0006260">
    <property type="term" value="P:DNA replication"/>
    <property type="evidence" value="ECO:0007669"/>
    <property type="project" value="UniProtKB-UniRule"/>
</dbReference>
<dbReference type="GO" id="GO:0045892">
    <property type="term" value="P:negative regulation of DNA-templated transcription"/>
    <property type="evidence" value="ECO:0007669"/>
    <property type="project" value="UniProtKB-UniRule"/>
</dbReference>
<dbReference type="GO" id="GO:0006508">
    <property type="term" value="P:proteolysis"/>
    <property type="evidence" value="ECO:0007669"/>
    <property type="project" value="InterPro"/>
</dbReference>
<dbReference type="GO" id="GO:0009432">
    <property type="term" value="P:SOS response"/>
    <property type="evidence" value="ECO:0007669"/>
    <property type="project" value="UniProtKB-UniRule"/>
</dbReference>
<dbReference type="CDD" id="cd06529">
    <property type="entry name" value="S24_LexA-like"/>
    <property type="match status" value="1"/>
</dbReference>
<dbReference type="FunFam" id="1.10.10.10:FF:000009">
    <property type="entry name" value="LexA repressor"/>
    <property type="match status" value="1"/>
</dbReference>
<dbReference type="FunFam" id="2.10.109.10:FF:000001">
    <property type="entry name" value="LexA repressor"/>
    <property type="match status" value="1"/>
</dbReference>
<dbReference type="Gene3D" id="2.10.109.10">
    <property type="entry name" value="Umud Fragment, subunit A"/>
    <property type="match status" value="1"/>
</dbReference>
<dbReference type="Gene3D" id="1.10.10.10">
    <property type="entry name" value="Winged helix-like DNA-binding domain superfamily/Winged helix DNA-binding domain"/>
    <property type="match status" value="1"/>
</dbReference>
<dbReference type="HAMAP" id="MF_00015">
    <property type="entry name" value="LexA"/>
    <property type="match status" value="1"/>
</dbReference>
<dbReference type="InterPro" id="IPR006200">
    <property type="entry name" value="LexA"/>
</dbReference>
<dbReference type="InterPro" id="IPR039418">
    <property type="entry name" value="LexA-like"/>
</dbReference>
<dbReference type="InterPro" id="IPR036286">
    <property type="entry name" value="LexA/Signal_pep-like_sf"/>
</dbReference>
<dbReference type="InterPro" id="IPR006199">
    <property type="entry name" value="LexA_DNA-bd_dom"/>
</dbReference>
<dbReference type="InterPro" id="IPR050077">
    <property type="entry name" value="LexA_repressor"/>
</dbReference>
<dbReference type="InterPro" id="IPR006197">
    <property type="entry name" value="Peptidase_S24_LexA"/>
</dbReference>
<dbReference type="InterPro" id="IPR015927">
    <property type="entry name" value="Peptidase_S24_S26A/B/C"/>
</dbReference>
<dbReference type="InterPro" id="IPR036388">
    <property type="entry name" value="WH-like_DNA-bd_sf"/>
</dbReference>
<dbReference type="InterPro" id="IPR036390">
    <property type="entry name" value="WH_DNA-bd_sf"/>
</dbReference>
<dbReference type="NCBIfam" id="TIGR00498">
    <property type="entry name" value="lexA"/>
    <property type="match status" value="1"/>
</dbReference>
<dbReference type="PANTHER" id="PTHR33516">
    <property type="entry name" value="LEXA REPRESSOR"/>
    <property type="match status" value="1"/>
</dbReference>
<dbReference type="PANTHER" id="PTHR33516:SF2">
    <property type="entry name" value="LEXA REPRESSOR-RELATED"/>
    <property type="match status" value="1"/>
</dbReference>
<dbReference type="Pfam" id="PF01726">
    <property type="entry name" value="LexA_DNA_bind"/>
    <property type="match status" value="1"/>
</dbReference>
<dbReference type="Pfam" id="PF00717">
    <property type="entry name" value="Peptidase_S24"/>
    <property type="match status" value="1"/>
</dbReference>
<dbReference type="PRINTS" id="PR00726">
    <property type="entry name" value="LEXASERPTASE"/>
</dbReference>
<dbReference type="SUPFAM" id="SSF51306">
    <property type="entry name" value="LexA/Signal peptidase"/>
    <property type="match status" value="1"/>
</dbReference>
<dbReference type="SUPFAM" id="SSF46785">
    <property type="entry name" value="Winged helix' DNA-binding domain"/>
    <property type="match status" value="1"/>
</dbReference>
<reference key="1">
    <citation type="journal article" date="2010" name="PLoS ONE">
        <title>The complete multipartite genome sequence of Cupriavidus necator JMP134, a versatile pollutant degrader.</title>
        <authorList>
            <person name="Lykidis A."/>
            <person name="Perez-Pantoja D."/>
            <person name="Ledger T."/>
            <person name="Mavromatis K."/>
            <person name="Anderson I.J."/>
            <person name="Ivanova N.N."/>
            <person name="Hooper S.D."/>
            <person name="Lapidus A."/>
            <person name="Lucas S."/>
            <person name="Gonzalez B."/>
            <person name="Kyrpides N.C."/>
        </authorList>
    </citation>
    <scope>NUCLEOTIDE SEQUENCE [LARGE SCALE GENOMIC DNA]</scope>
    <source>
        <strain>JMP134 / LMG 1197</strain>
    </source>
</reference>
<protein>
    <recommendedName>
        <fullName evidence="1">LexA repressor</fullName>
        <ecNumber evidence="1">3.4.21.88</ecNumber>
    </recommendedName>
</protein>
<evidence type="ECO:0000255" key="1">
    <source>
        <dbReference type="HAMAP-Rule" id="MF_00015"/>
    </source>
</evidence>
<accession>Q46ZR1</accession>
<proteinExistence type="inferred from homology"/>
<feature type="chain" id="PRO_1000001322" description="LexA repressor">
    <location>
        <begin position="1"/>
        <end position="218"/>
    </location>
</feature>
<feature type="DNA-binding region" description="H-T-H motif" evidence="1">
    <location>
        <begin position="28"/>
        <end position="48"/>
    </location>
</feature>
<feature type="active site" description="For autocatalytic cleavage activity" evidence="1">
    <location>
        <position position="136"/>
    </location>
</feature>
<feature type="active site" description="For autocatalytic cleavage activity" evidence="1">
    <location>
        <position position="173"/>
    </location>
</feature>
<feature type="site" description="Cleavage; by autolysis" evidence="1">
    <location>
        <begin position="101"/>
        <end position="102"/>
    </location>
</feature>
<comment type="function">
    <text evidence="1">Represses a number of genes involved in the response to DNA damage (SOS response), including recA and lexA. In the presence of single-stranded DNA, RecA interacts with LexA causing an autocatalytic cleavage which disrupts the DNA-binding part of LexA, leading to derepression of the SOS regulon and eventually DNA repair.</text>
</comment>
<comment type="catalytic activity">
    <reaction evidence="1">
        <text>Hydrolysis of Ala-|-Gly bond in repressor LexA.</text>
        <dbReference type="EC" id="3.4.21.88"/>
    </reaction>
</comment>
<comment type="subunit">
    <text evidence="1">Homodimer.</text>
</comment>
<comment type="similarity">
    <text evidence="1">Belongs to the peptidase S24 family.</text>
</comment>
<sequence>MATLTPRQQQIFDLIRNTIRNTGFPPTRAEIAAEFGFSSPNAAEEHLRALARKGVIELTPGASRGIRLKVARSDSEMPDQFSLPVSGIMQLTLPLVGRVAAGSPILAAEHIDRQYQVDASVFDERPDYLLRVRGLSMRDAGILDGDLLAVRKASEAPNGKIVVARLGDDVTVKRLQRRDGAIELIAENPDFPNIMVTPGREEFSLEGIAVGLIRSSGF</sequence>
<gene>
    <name evidence="1" type="primary">lexA</name>
    <name type="ordered locus">Reut_A2008</name>
</gene>
<name>LEXA_CUPPJ</name>
<organism>
    <name type="scientific">Cupriavidus pinatubonensis (strain JMP 134 / LMG 1197)</name>
    <name type="common">Cupriavidus necator (strain JMP 134)</name>
    <dbReference type="NCBI Taxonomy" id="264198"/>
    <lineage>
        <taxon>Bacteria</taxon>
        <taxon>Pseudomonadati</taxon>
        <taxon>Pseudomonadota</taxon>
        <taxon>Betaproteobacteria</taxon>
        <taxon>Burkholderiales</taxon>
        <taxon>Burkholderiaceae</taxon>
        <taxon>Cupriavidus</taxon>
    </lineage>
</organism>
<keyword id="KW-0068">Autocatalytic cleavage</keyword>
<keyword id="KW-0227">DNA damage</keyword>
<keyword id="KW-0234">DNA repair</keyword>
<keyword id="KW-0235">DNA replication</keyword>
<keyword id="KW-0238">DNA-binding</keyword>
<keyword id="KW-0378">Hydrolase</keyword>
<keyword id="KW-0678">Repressor</keyword>
<keyword id="KW-0742">SOS response</keyword>
<keyword id="KW-0804">Transcription</keyword>
<keyword id="KW-0805">Transcription regulation</keyword>